<proteinExistence type="inferred from homology"/>
<keyword id="KW-0249">Electron transport</keyword>
<keyword id="KW-0349">Heme</keyword>
<keyword id="KW-0408">Iron</keyword>
<keyword id="KW-0472">Membrane</keyword>
<keyword id="KW-0479">Metal-binding</keyword>
<keyword id="KW-0496">Mitochondrion</keyword>
<keyword id="KW-0999">Mitochondrion inner membrane</keyword>
<keyword id="KW-0679">Respiratory chain</keyword>
<keyword id="KW-0812">Transmembrane</keyword>
<keyword id="KW-1133">Transmembrane helix</keyword>
<keyword id="KW-0813">Transport</keyword>
<keyword id="KW-0830">Ubiquinone</keyword>
<protein>
    <recommendedName>
        <fullName>Cytochrome b</fullName>
    </recommendedName>
    <alternativeName>
        <fullName>Complex III subunit 3</fullName>
    </alternativeName>
    <alternativeName>
        <fullName>Complex III subunit III</fullName>
    </alternativeName>
    <alternativeName>
        <fullName>Cytochrome b-c1 complex subunit 3</fullName>
    </alternativeName>
    <alternativeName>
        <fullName>Ubiquinol-cytochrome-c reductase complex cytochrome b subunit</fullName>
    </alternativeName>
</protein>
<dbReference type="EMBL" id="AF088935">
    <property type="protein sequence ID" value="AAD38445.1"/>
    <property type="molecule type" value="Genomic_DNA"/>
</dbReference>
<dbReference type="SMR" id="Q9XP73"/>
<dbReference type="GO" id="GO:0005743">
    <property type="term" value="C:mitochondrial inner membrane"/>
    <property type="evidence" value="ECO:0007669"/>
    <property type="project" value="UniProtKB-SubCell"/>
</dbReference>
<dbReference type="GO" id="GO:0045275">
    <property type="term" value="C:respiratory chain complex III"/>
    <property type="evidence" value="ECO:0007669"/>
    <property type="project" value="InterPro"/>
</dbReference>
<dbReference type="GO" id="GO:0046872">
    <property type="term" value="F:metal ion binding"/>
    <property type="evidence" value="ECO:0007669"/>
    <property type="project" value="UniProtKB-KW"/>
</dbReference>
<dbReference type="GO" id="GO:0008121">
    <property type="term" value="F:ubiquinol-cytochrome-c reductase activity"/>
    <property type="evidence" value="ECO:0007669"/>
    <property type="project" value="InterPro"/>
</dbReference>
<dbReference type="GO" id="GO:0006122">
    <property type="term" value="P:mitochondrial electron transport, ubiquinol to cytochrome c"/>
    <property type="evidence" value="ECO:0007669"/>
    <property type="project" value="TreeGrafter"/>
</dbReference>
<dbReference type="CDD" id="cd00290">
    <property type="entry name" value="cytochrome_b_C"/>
    <property type="match status" value="1"/>
</dbReference>
<dbReference type="CDD" id="cd00284">
    <property type="entry name" value="Cytochrome_b_N"/>
    <property type="match status" value="1"/>
</dbReference>
<dbReference type="FunFam" id="1.20.810.10:FF:000002">
    <property type="entry name" value="Cytochrome b"/>
    <property type="match status" value="1"/>
</dbReference>
<dbReference type="Gene3D" id="1.20.810.10">
    <property type="entry name" value="Cytochrome Bc1 Complex, Chain C"/>
    <property type="match status" value="1"/>
</dbReference>
<dbReference type="InterPro" id="IPR005798">
    <property type="entry name" value="Cyt_b/b6_C"/>
</dbReference>
<dbReference type="InterPro" id="IPR036150">
    <property type="entry name" value="Cyt_b/b6_C_sf"/>
</dbReference>
<dbReference type="InterPro" id="IPR005797">
    <property type="entry name" value="Cyt_b/b6_N"/>
</dbReference>
<dbReference type="InterPro" id="IPR027387">
    <property type="entry name" value="Cytb/b6-like_sf"/>
</dbReference>
<dbReference type="InterPro" id="IPR030689">
    <property type="entry name" value="Cytochrome_b"/>
</dbReference>
<dbReference type="InterPro" id="IPR048260">
    <property type="entry name" value="Cytochrome_b_C_euk/bac"/>
</dbReference>
<dbReference type="InterPro" id="IPR048259">
    <property type="entry name" value="Cytochrome_b_N_euk/bac"/>
</dbReference>
<dbReference type="InterPro" id="IPR016174">
    <property type="entry name" value="Di-haem_cyt_TM"/>
</dbReference>
<dbReference type="PANTHER" id="PTHR19271">
    <property type="entry name" value="CYTOCHROME B"/>
    <property type="match status" value="1"/>
</dbReference>
<dbReference type="PANTHER" id="PTHR19271:SF16">
    <property type="entry name" value="CYTOCHROME B"/>
    <property type="match status" value="1"/>
</dbReference>
<dbReference type="Pfam" id="PF00032">
    <property type="entry name" value="Cytochrom_B_C"/>
    <property type="match status" value="1"/>
</dbReference>
<dbReference type="Pfam" id="PF00033">
    <property type="entry name" value="Cytochrome_B"/>
    <property type="match status" value="1"/>
</dbReference>
<dbReference type="PIRSF" id="PIRSF038885">
    <property type="entry name" value="COB"/>
    <property type="match status" value="1"/>
</dbReference>
<dbReference type="SUPFAM" id="SSF81648">
    <property type="entry name" value="a domain/subunit of cytochrome bc1 complex (Ubiquinol-cytochrome c reductase)"/>
    <property type="match status" value="1"/>
</dbReference>
<dbReference type="SUPFAM" id="SSF81342">
    <property type="entry name" value="Transmembrane di-heme cytochromes"/>
    <property type="match status" value="1"/>
</dbReference>
<dbReference type="PROSITE" id="PS51003">
    <property type="entry name" value="CYTB_CTER"/>
    <property type="match status" value="1"/>
</dbReference>
<dbReference type="PROSITE" id="PS51002">
    <property type="entry name" value="CYTB_NTER"/>
    <property type="match status" value="1"/>
</dbReference>
<geneLocation type="mitochondrion"/>
<organism>
    <name type="scientific">Sminthopsis youngsoni</name>
    <name type="common">Lesser hairy-footed dunnart</name>
    <dbReference type="NCBI Taxonomy" id="90770"/>
    <lineage>
        <taxon>Eukaryota</taxon>
        <taxon>Metazoa</taxon>
        <taxon>Chordata</taxon>
        <taxon>Craniata</taxon>
        <taxon>Vertebrata</taxon>
        <taxon>Euteleostomi</taxon>
        <taxon>Mammalia</taxon>
        <taxon>Metatheria</taxon>
        <taxon>Dasyuromorphia</taxon>
        <taxon>Dasyuridae</taxon>
        <taxon>Sminthopsis</taxon>
    </lineage>
</organism>
<reference key="1">
    <citation type="journal article" date="1999" name="Mol. Phylogenet. Evol.">
        <title>Systematic relationships within the dasyurid marsupial tribe Sminthopsini -- a multigene approach.</title>
        <authorList>
            <person name="Blacket M.J."/>
            <person name="Krajewski C."/>
            <person name="Labrinidis A."/>
            <person name="Cambron B."/>
            <person name="Cooper S."/>
            <person name="Westerman M."/>
        </authorList>
    </citation>
    <scope>NUCLEOTIDE SEQUENCE [GENOMIC DNA]</scope>
</reference>
<comment type="function">
    <text evidence="2">Component of the ubiquinol-cytochrome c reductase complex (complex III or cytochrome b-c1 complex) that is part of the mitochondrial respiratory chain. The b-c1 complex mediates electron transfer from ubiquinol to cytochrome c. Contributes to the generation of a proton gradient across the mitochondrial membrane that is then used for ATP synthesis.</text>
</comment>
<comment type="cofactor">
    <cofactor evidence="2">
        <name>heme b</name>
        <dbReference type="ChEBI" id="CHEBI:60344"/>
    </cofactor>
    <text evidence="2">Binds 2 heme b groups non-covalently.</text>
</comment>
<comment type="subunit">
    <text evidence="2">The cytochrome bc1 complex contains 11 subunits: 3 respiratory subunits (MT-CYB, CYC1 and UQCRFS1), 2 core proteins (UQCRC1 and UQCRC2) and 6 low-molecular weight proteins (UQCRH/QCR6, UQCRB/QCR7, UQCRQ/QCR8, UQCR10/QCR9, UQCR11/QCR10 and a cleavage product of UQCRFS1). This cytochrome bc1 complex then forms a dimer.</text>
</comment>
<comment type="subcellular location">
    <subcellularLocation>
        <location evidence="2">Mitochondrion inner membrane</location>
        <topology evidence="2">Multi-pass membrane protein</topology>
    </subcellularLocation>
</comment>
<comment type="miscellaneous">
    <text evidence="1">Heme 1 (or BL or b562) is low-potential and absorbs at about 562 nm, and heme 2 (or BH or b566) is high-potential and absorbs at about 566 nm.</text>
</comment>
<comment type="similarity">
    <text evidence="3 4">Belongs to the cytochrome b family.</text>
</comment>
<comment type="caution">
    <text evidence="2">The full-length protein contains only eight transmembrane helices, not nine as predicted by bioinformatics tools.</text>
</comment>
<sequence length="381" mass="42806">MINLRKTHPLMKIINHSFIDLPAPSNISAWWNFGSLLGICLVIQILTGLFLAMHYTSDTLTAFSSVAHICRDVNYGWLIRNLHANGASMFFMCLFLHVGRGIYYGSYLYKETWNIGVMLLLTVTATAFVGYVLPWGQMSFWGATVTTNLFSAIPYIGQTLVEWAWGGFSVDKATLTRFFALHFLLPFVIAGLTLVHLTFLHETGSNNPLGIPSDCDKIPFHPYYSIKDILGLMFLLLVLLSLALFSPDLLGDPDNFSPANPLNTPPHIKPEWYFLFAYAILRSIPNKLGGVLALLASILILLVIPFLHTANQRSMMFRPISQTLFWILTANLITLTWIGGQPVEQPFIIIGQPASILYFPLIHHPMPSAGLFENYMPKPKW</sequence>
<gene>
    <name type="primary">MT-CYB</name>
    <name type="synonym">COB</name>
    <name type="synonym">CYTB</name>
    <name type="synonym">MTCYB</name>
</gene>
<accession>Q9XP73</accession>
<evidence type="ECO:0000250" key="1"/>
<evidence type="ECO:0000250" key="2">
    <source>
        <dbReference type="UniProtKB" id="P00157"/>
    </source>
</evidence>
<evidence type="ECO:0000255" key="3">
    <source>
        <dbReference type="PROSITE-ProRule" id="PRU00967"/>
    </source>
</evidence>
<evidence type="ECO:0000255" key="4">
    <source>
        <dbReference type="PROSITE-ProRule" id="PRU00968"/>
    </source>
</evidence>
<feature type="chain" id="PRO_0000254865" description="Cytochrome b">
    <location>
        <begin position="1"/>
        <end position="381"/>
    </location>
</feature>
<feature type="transmembrane region" description="Helical" evidence="2">
    <location>
        <begin position="33"/>
        <end position="53"/>
    </location>
</feature>
<feature type="transmembrane region" description="Helical" evidence="2">
    <location>
        <begin position="77"/>
        <end position="98"/>
    </location>
</feature>
<feature type="transmembrane region" description="Helical" evidence="2">
    <location>
        <begin position="113"/>
        <end position="133"/>
    </location>
</feature>
<feature type="transmembrane region" description="Helical" evidence="2">
    <location>
        <begin position="178"/>
        <end position="198"/>
    </location>
</feature>
<feature type="transmembrane region" description="Helical" evidence="2">
    <location>
        <begin position="226"/>
        <end position="246"/>
    </location>
</feature>
<feature type="transmembrane region" description="Helical" evidence="2">
    <location>
        <begin position="288"/>
        <end position="308"/>
    </location>
</feature>
<feature type="transmembrane region" description="Helical" evidence="2">
    <location>
        <begin position="320"/>
        <end position="340"/>
    </location>
</feature>
<feature type="transmembrane region" description="Helical" evidence="2">
    <location>
        <begin position="347"/>
        <end position="367"/>
    </location>
</feature>
<feature type="binding site" description="axial binding residue" evidence="2">
    <location>
        <position position="83"/>
    </location>
    <ligand>
        <name>heme b</name>
        <dbReference type="ChEBI" id="CHEBI:60344"/>
        <label>b562</label>
    </ligand>
    <ligandPart>
        <name>Fe</name>
        <dbReference type="ChEBI" id="CHEBI:18248"/>
    </ligandPart>
</feature>
<feature type="binding site" description="axial binding residue" evidence="2">
    <location>
        <position position="97"/>
    </location>
    <ligand>
        <name>heme b</name>
        <dbReference type="ChEBI" id="CHEBI:60344"/>
        <label>b566</label>
    </ligand>
    <ligandPart>
        <name>Fe</name>
        <dbReference type="ChEBI" id="CHEBI:18248"/>
    </ligandPart>
</feature>
<feature type="binding site" description="axial binding residue" evidence="2">
    <location>
        <position position="182"/>
    </location>
    <ligand>
        <name>heme b</name>
        <dbReference type="ChEBI" id="CHEBI:60344"/>
        <label>b562</label>
    </ligand>
    <ligandPart>
        <name>Fe</name>
        <dbReference type="ChEBI" id="CHEBI:18248"/>
    </ligandPart>
</feature>
<feature type="binding site" description="axial binding residue" evidence="2">
    <location>
        <position position="196"/>
    </location>
    <ligand>
        <name>heme b</name>
        <dbReference type="ChEBI" id="CHEBI:60344"/>
        <label>b566</label>
    </ligand>
    <ligandPart>
        <name>Fe</name>
        <dbReference type="ChEBI" id="CHEBI:18248"/>
    </ligandPart>
</feature>
<feature type="binding site" evidence="2">
    <location>
        <position position="201"/>
    </location>
    <ligand>
        <name>a ubiquinone</name>
        <dbReference type="ChEBI" id="CHEBI:16389"/>
    </ligand>
</feature>
<name>CYB_SMIYO</name>